<reference key="1">
    <citation type="journal article" date="2009" name="BMC Genomics">
        <title>Analysis of the Rickettsia africae genome reveals that virulence acquisition in Rickettsia species may be explained by genome reduction.</title>
        <authorList>
            <person name="Fournier P.-E."/>
            <person name="El Karkouri K."/>
            <person name="Leroy Q."/>
            <person name="Robert C."/>
            <person name="Giumelli B."/>
            <person name="Renesto P."/>
            <person name="Socolovschi C."/>
            <person name="Parola P."/>
            <person name="Audic S."/>
            <person name="Raoult D."/>
        </authorList>
    </citation>
    <scope>NUCLEOTIDE SEQUENCE [LARGE SCALE GENOMIC DNA]</scope>
    <source>
        <strain>ESF-5</strain>
    </source>
</reference>
<proteinExistence type="inferred from homology"/>
<organism>
    <name type="scientific">Rickettsia africae (strain ESF-5)</name>
    <dbReference type="NCBI Taxonomy" id="347255"/>
    <lineage>
        <taxon>Bacteria</taxon>
        <taxon>Pseudomonadati</taxon>
        <taxon>Pseudomonadota</taxon>
        <taxon>Alphaproteobacteria</taxon>
        <taxon>Rickettsiales</taxon>
        <taxon>Rickettsiaceae</taxon>
        <taxon>Rickettsieae</taxon>
        <taxon>Rickettsia</taxon>
        <taxon>spotted fever group</taxon>
    </lineage>
</organism>
<protein>
    <recommendedName>
        <fullName evidence="1">Serine--tRNA ligase</fullName>
        <ecNumber evidence="1">6.1.1.11</ecNumber>
    </recommendedName>
    <alternativeName>
        <fullName evidence="1">Seryl-tRNA synthetase</fullName>
        <shortName evidence="1">SerRS</shortName>
    </alternativeName>
    <alternativeName>
        <fullName evidence="1">Seryl-tRNA(Ser/Sec) synthetase</fullName>
    </alternativeName>
</protein>
<name>SYS_RICAE</name>
<sequence length="425" mass="48479">MLNIKWIRENKELFDEKLSQRFIEPMSSKIAMLDGKKRKITSLIQEFQHARKVKSKILGNMASKSGEEFEGLQRDVKHINEKLEALEQELNNNNELNELLNMFPNIPDEEVPYGMDESMNKLVRTYGETNPNALNKQHFELGIKLNLMDFEQTAKISGTRFVTLKGDLAKLERALINFMIDVHTKEWDFFEISPPVLVRDNAMYNAGQLPKFAEESFATTNGYRLIPTAEVSLVNMVADTIIPREKLPIRYVAYTPCFRSEAGSSGKDTRGMIRLHQFGKVELVSITTPEESTNEHEYITNASETILQKLNLPYRVMLLCTGDMGFAAKKTYDIEIWLPGQKQYREIASCSNCGDFQARRMKARYKEFGSNETTLVHTLNASGLPIGRTMVAILENYQNEDGSITIPDVLINYMGGLQKIIAYSE</sequence>
<accession>C3PLR3</accession>
<evidence type="ECO:0000255" key="1">
    <source>
        <dbReference type="HAMAP-Rule" id="MF_00176"/>
    </source>
</evidence>
<feature type="chain" id="PRO_1000203766" description="Serine--tRNA ligase">
    <location>
        <begin position="1"/>
        <end position="425"/>
    </location>
</feature>
<feature type="binding site" evidence="1">
    <location>
        <begin position="228"/>
        <end position="230"/>
    </location>
    <ligand>
        <name>L-serine</name>
        <dbReference type="ChEBI" id="CHEBI:33384"/>
    </ligand>
</feature>
<feature type="binding site" evidence="1">
    <location>
        <begin position="259"/>
        <end position="261"/>
    </location>
    <ligand>
        <name>ATP</name>
        <dbReference type="ChEBI" id="CHEBI:30616"/>
    </ligand>
</feature>
<feature type="binding site" evidence="1">
    <location>
        <position position="282"/>
    </location>
    <ligand>
        <name>L-serine</name>
        <dbReference type="ChEBI" id="CHEBI:33384"/>
    </ligand>
</feature>
<feature type="binding site" evidence="1">
    <location>
        <begin position="346"/>
        <end position="349"/>
    </location>
    <ligand>
        <name>ATP</name>
        <dbReference type="ChEBI" id="CHEBI:30616"/>
    </ligand>
</feature>
<feature type="binding site" evidence="1">
    <location>
        <position position="382"/>
    </location>
    <ligand>
        <name>L-serine</name>
        <dbReference type="ChEBI" id="CHEBI:33384"/>
    </ligand>
</feature>
<keyword id="KW-0030">Aminoacyl-tRNA synthetase</keyword>
<keyword id="KW-0067">ATP-binding</keyword>
<keyword id="KW-0963">Cytoplasm</keyword>
<keyword id="KW-0436">Ligase</keyword>
<keyword id="KW-0547">Nucleotide-binding</keyword>
<keyword id="KW-0648">Protein biosynthesis</keyword>
<dbReference type="EC" id="6.1.1.11" evidence="1"/>
<dbReference type="EMBL" id="CP001612">
    <property type="protein sequence ID" value="ACP53903.1"/>
    <property type="molecule type" value="Genomic_DNA"/>
</dbReference>
<dbReference type="RefSeq" id="WP_012720031.1">
    <property type="nucleotide sequence ID" value="NC_012633.1"/>
</dbReference>
<dbReference type="SMR" id="C3PLR3"/>
<dbReference type="KEGG" id="raf:RAF_ORF1108"/>
<dbReference type="HOGENOM" id="CLU_023797_1_1_5"/>
<dbReference type="UniPathway" id="UPA00906">
    <property type="reaction ID" value="UER00895"/>
</dbReference>
<dbReference type="Proteomes" id="UP000002305">
    <property type="component" value="Chromosome"/>
</dbReference>
<dbReference type="GO" id="GO:0005737">
    <property type="term" value="C:cytoplasm"/>
    <property type="evidence" value="ECO:0007669"/>
    <property type="project" value="UniProtKB-SubCell"/>
</dbReference>
<dbReference type="GO" id="GO:0005524">
    <property type="term" value="F:ATP binding"/>
    <property type="evidence" value="ECO:0007669"/>
    <property type="project" value="UniProtKB-UniRule"/>
</dbReference>
<dbReference type="GO" id="GO:0004828">
    <property type="term" value="F:serine-tRNA ligase activity"/>
    <property type="evidence" value="ECO:0007669"/>
    <property type="project" value="UniProtKB-UniRule"/>
</dbReference>
<dbReference type="GO" id="GO:0016260">
    <property type="term" value="P:selenocysteine biosynthetic process"/>
    <property type="evidence" value="ECO:0007669"/>
    <property type="project" value="UniProtKB-UniRule"/>
</dbReference>
<dbReference type="GO" id="GO:0006434">
    <property type="term" value="P:seryl-tRNA aminoacylation"/>
    <property type="evidence" value="ECO:0007669"/>
    <property type="project" value="UniProtKB-UniRule"/>
</dbReference>
<dbReference type="CDD" id="cd00770">
    <property type="entry name" value="SerRS_core"/>
    <property type="match status" value="1"/>
</dbReference>
<dbReference type="Gene3D" id="3.30.930.10">
    <property type="entry name" value="Bira Bifunctional Protein, Domain 2"/>
    <property type="match status" value="1"/>
</dbReference>
<dbReference type="Gene3D" id="1.10.287.40">
    <property type="entry name" value="Serine-tRNA synthetase, tRNA binding domain"/>
    <property type="match status" value="1"/>
</dbReference>
<dbReference type="HAMAP" id="MF_00176">
    <property type="entry name" value="Ser_tRNA_synth_type1"/>
    <property type="match status" value="1"/>
</dbReference>
<dbReference type="InterPro" id="IPR002314">
    <property type="entry name" value="aa-tRNA-synt_IIb"/>
</dbReference>
<dbReference type="InterPro" id="IPR006195">
    <property type="entry name" value="aa-tRNA-synth_II"/>
</dbReference>
<dbReference type="InterPro" id="IPR045864">
    <property type="entry name" value="aa-tRNA-synth_II/BPL/LPL"/>
</dbReference>
<dbReference type="InterPro" id="IPR002317">
    <property type="entry name" value="Ser-tRNA-ligase_type_1"/>
</dbReference>
<dbReference type="InterPro" id="IPR015866">
    <property type="entry name" value="Ser-tRNA-synth_1_N"/>
</dbReference>
<dbReference type="InterPro" id="IPR042103">
    <property type="entry name" value="SerRS_1_N_sf"/>
</dbReference>
<dbReference type="InterPro" id="IPR033729">
    <property type="entry name" value="SerRS_core"/>
</dbReference>
<dbReference type="InterPro" id="IPR010978">
    <property type="entry name" value="tRNA-bd_arm"/>
</dbReference>
<dbReference type="NCBIfam" id="TIGR00414">
    <property type="entry name" value="serS"/>
    <property type="match status" value="1"/>
</dbReference>
<dbReference type="PANTHER" id="PTHR43697:SF1">
    <property type="entry name" value="SERINE--TRNA LIGASE"/>
    <property type="match status" value="1"/>
</dbReference>
<dbReference type="PANTHER" id="PTHR43697">
    <property type="entry name" value="SERYL-TRNA SYNTHETASE"/>
    <property type="match status" value="1"/>
</dbReference>
<dbReference type="Pfam" id="PF02403">
    <property type="entry name" value="Seryl_tRNA_N"/>
    <property type="match status" value="1"/>
</dbReference>
<dbReference type="Pfam" id="PF00587">
    <property type="entry name" value="tRNA-synt_2b"/>
    <property type="match status" value="1"/>
</dbReference>
<dbReference type="PIRSF" id="PIRSF001529">
    <property type="entry name" value="Ser-tRNA-synth_IIa"/>
    <property type="match status" value="1"/>
</dbReference>
<dbReference type="PRINTS" id="PR00981">
    <property type="entry name" value="TRNASYNTHSER"/>
</dbReference>
<dbReference type="SUPFAM" id="SSF55681">
    <property type="entry name" value="Class II aaRS and biotin synthetases"/>
    <property type="match status" value="1"/>
</dbReference>
<dbReference type="SUPFAM" id="SSF46589">
    <property type="entry name" value="tRNA-binding arm"/>
    <property type="match status" value="1"/>
</dbReference>
<dbReference type="PROSITE" id="PS50862">
    <property type="entry name" value="AA_TRNA_LIGASE_II"/>
    <property type="match status" value="1"/>
</dbReference>
<comment type="function">
    <text evidence="1">Catalyzes the attachment of serine to tRNA(Ser). Is also able to aminoacylate tRNA(Sec) with serine, to form the misacylated tRNA L-seryl-tRNA(Sec), which will be further converted into selenocysteinyl-tRNA(Sec).</text>
</comment>
<comment type="catalytic activity">
    <reaction evidence="1">
        <text>tRNA(Ser) + L-serine + ATP = L-seryl-tRNA(Ser) + AMP + diphosphate + H(+)</text>
        <dbReference type="Rhea" id="RHEA:12292"/>
        <dbReference type="Rhea" id="RHEA-COMP:9669"/>
        <dbReference type="Rhea" id="RHEA-COMP:9703"/>
        <dbReference type="ChEBI" id="CHEBI:15378"/>
        <dbReference type="ChEBI" id="CHEBI:30616"/>
        <dbReference type="ChEBI" id="CHEBI:33019"/>
        <dbReference type="ChEBI" id="CHEBI:33384"/>
        <dbReference type="ChEBI" id="CHEBI:78442"/>
        <dbReference type="ChEBI" id="CHEBI:78533"/>
        <dbReference type="ChEBI" id="CHEBI:456215"/>
        <dbReference type="EC" id="6.1.1.11"/>
    </reaction>
</comment>
<comment type="catalytic activity">
    <reaction evidence="1">
        <text>tRNA(Sec) + L-serine + ATP = L-seryl-tRNA(Sec) + AMP + diphosphate + H(+)</text>
        <dbReference type="Rhea" id="RHEA:42580"/>
        <dbReference type="Rhea" id="RHEA-COMP:9742"/>
        <dbReference type="Rhea" id="RHEA-COMP:10128"/>
        <dbReference type="ChEBI" id="CHEBI:15378"/>
        <dbReference type="ChEBI" id="CHEBI:30616"/>
        <dbReference type="ChEBI" id="CHEBI:33019"/>
        <dbReference type="ChEBI" id="CHEBI:33384"/>
        <dbReference type="ChEBI" id="CHEBI:78442"/>
        <dbReference type="ChEBI" id="CHEBI:78533"/>
        <dbReference type="ChEBI" id="CHEBI:456215"/>
        <dbReference type="EC" id="6.1.1.11"/>
    </reaction>
</comment>
<comment type="pathway">
    <text evidence="1">Aminoacyl-tRNA biosynthesis; selenocysteinyl-tRNA(Sec) biosynthesis; L-seryl-tRNA(Sec) from L-serine and tRNA(Sec): step 1/1.</text>
</comment>
<comment type="subunit">
    <text evidence="1">Homodimer. The tRNA molecule binds across the dimer.</text>
</comment>
<comment type="subcellular location">
    <subcellularLocation>
        <location evidence="1">Cytoplasm</location>
    </subcellularLocation>
</comment>
<comment type="domain">
    <text evidence="1">Consists of two distinct domains, a catalytic core and a N-terminal extension that is involved in tRNA binding.</text>
</comment>
<comment type="similarity">
    <text evidence="1">Belongs to the class-II aminoacyl-tRNA synthetase family. Type-1 seryl-tRNA synthetase subfamily.</text>
</comment>
<gene>
    <name evidence="1" type="primary">serS</name>
    <name type="ordered locus">RAF_ORF1108</name>
</gene>